<gene>
    <name type="primary">GP</name>
</gene>
<keyword id="KW-0165">Cleavage on pair of basic residues</keyword>
<keyword id="KW-1015">Disulfide bond</keyword>
<keyword id="KW-0325">Glycoprotein</keyword>
<keyword id="KW-0407">Ion channel</keyword>
<keyword id="KW-0406">Ion transport</keyword>
<keyword id="KW-0691">RNA editing</keyword>
<keyword id="KW-0964">Secreted</keyword>
<keyword id="KW-0732">Signal</keyword>
<keyword id="KW-0813">Transport</keyword>
<keyword id="KW-1182">Viral ion channel</keyword>
<dbReference type="EMBL" id="U28006">
    <property type="protein sequence ID" value="AAB37092.1"/>
    <property type="molecule type" value="Genomic_RNA"/>
</dbReference>
<dbReference type="SMR" id="Q66811"/>
<dbReference type="GlyCosmos" id="Q66811">
    <property type="glycosylation" value="5 sites, No reported glycans"/>
</dbReference>
<dbReference type="GO" id="GO:0005576">
    <property type="term" value="C:extracellular region"/>
    <property type="evidence" value="ECO:0007669"/>
    <property type="project" value="UniProtKB-SubCell"/>
</dbReference>
<dbReference type="GO" id="GO:0033644">
    <property type="term" value="C:host cell membrane"/>
    <property type="evidence" value="ECO:0007669"/>
    <property type="project" value="UniProtKB-KW"/>
</dbReference>
<dbReference type="GO" id="GO:0015267">
    <property type="term" value="F:channel activity"/>
    <property type="evidence" value="ECO:0007669"/>
    <property type="project" value="UniProtKB-KW"/>
</dbReference>
<dbReference type="GO" id="GO:0034220">
    <property type="term" value="P:monoatomic ion transmembrane transport"/>
    <property type="evidence" value="ECO:0007669"/>
    <property type="project" value="UniProtKB-KW"/>
</dbReference>
<dbReference type="InterPro" id="IPR014625">
    <property type="entry name" value="GPC_FiloV"/>
</dbReference>
<dbReference type="InterPro" id="IPR002561">
    <property type="entry name" value="GPC_filovir-type_extra_dom"/>
</dbReference>
<dbReference type="Pfam" id="PF01611">
    <property type="entry name" value="Filo_glycop"/>
    <property type="match status" value="1"/>
</dbReference>
<dbReference type="PIRSF" id="PIRSF036874">
    <property type="entry name" value="GPC_FiloV"/>
    <property type="match status" value="1"/>
</dbReference>
<organismHost>
    <name type="scientific">Epomops franqueti</name>
    <name type="common">Franquet's epauletted fruit bat</name>
    <name type="synonym">Epomophorus franqueti</name>
    <dbReference type="NCBI Taxonomy" id="77231"/>
</organismHost>
<organismHost>
    <name type="scientific">Homo sapiens</name>
    <name type="common">Human</name>
    <dbReference type="NCBI Taxonomy" id="9606"/>
</organismHost>
<organismHost>
    <name type="scientific">Myonycteris torquata</name>
    <name type="common">Little collared fruit bat</name>
    <dbReference type="NCBI Taxonomy" id="77243"/>
</organismHost>
<comment type="function">
    <molecule>Small/secreted glycoprotein</molecule>
    <text evidence="2">Seems to possess an anti-inflammatory activity as it can reverse the barrier-decreasing effects of TNF alpha. Might therefore contribute to the lack of inflammatory reaction seen during infection in spite the of extensive necrosis and massive virus production. Does not seem to be involved in activation of primary macrophages. Does not seem to interact specifically with neutrophils.</text>
</comment>
<comment type="function">
    <molecule>Delta-peptide</molecule>
    <text evidence="2">Viroporin that permeabilizes mammalian cell plasma membranes. It acts by altering permeation of ionic compounds and small molecules. This activity may lead to viral enterotoxic activity.</text>
</comment>
<comment type="subunit">
    <molecule>Small/secreted glycoprotein</molecule>
    <text evidence="2">Homodimer; disulfide-linked (By similarity). The homodimers are linked by two disulfide bonds in a parallel orientation (By similarity).</text>
</comment>
<comment type="subunit">
    <molecule>Delta-peptide</molecule>
    <text>Monomer.</text>
</comment>
<comment type="subcellular location">
    <molecule>Small/secreted glycoprotein</molecule>
    <subcellularLocation>
        <location evidence="2">Secreted</location>
    </subcellularLocation>
</comment>
<comment type="subcellular location">
    <molecule>Delta-peptide</molecule>
    <subcellularLocation>
        <location evidence="2">Secreted</location>
    </subcellularLocation>
</comment>
<comment type="PTM">
    <molecule>Pre-small/secreted glycoprotein</molecule>
    <text evidence="2">This precursor is processed into mature sGP and delta-peptide by host furin or furin-like proteases. The cleavage site corresponds to the furin optimal cleavage sequence [KR]-X-[KR]-R.</text>
</comment>
<comment type="PTM">
    <molecule>Small/secreted glycoprotein</molecule>
    <text evidence="2">N-glycosylated.</text>
</comment>
<comment type="PTM">
    <molecule>Delta-peptide</molecule>
    <text evidence="2">O-glycosylated.</text>
</comment>
<comment type="RNA editing">
    <location>
        <position position="295" evidence="4"/>
    </location>
    <text>Partially edited. RNA editing at this position consists of an insertion of one adenine nucleotide. The sequence displayed here is the small secreted glycoprotein, derived from the unedited RNA. The edited RNA gives rise to the full-length transmembrane glycoprotein (AC Q66810).</text>
</comment>
<comment type="similarity">
    <text evidence="5">Belongs to the filoviruses glycoprotein family.</text>
</comment>
<feature type="signal peptide" evidence="3">
    <location>
        <begin position="1"/>
        <end position="32"/>
    </location>
</feature>
<feature type="chain" id="PRO_0000037494" description="Pre-small/secreted glycoprotein" evidence="1">
    <location>
        <begin position="33"/>
        <end position="365"/>
    </location>
</feature>
<feature type="chain" id="PRO_0000037495" description="Small/secreted glycoprotein" evidence="1">
    <location>
        <begin position="33"/>
        <end position="324"/>
    </location>
</feature>
<feature type="chain" id="PRO_0000037496" description="Delta-peptide" evidence="1">
    <location>
        <begin position="325"/>
        <end position="365"/>
    </location>
</feature>
<feature type="site" description="Cleavage; by host furin" evidence="1">
    <location>
        <begin position="324"/>
        <end position="325"/>
    </location>
</feature>
<feature type="glycosylation site" description="N-linked (GlcNAc...) asparagine; by host" evidence="3">
    <location>
        <position position="40"/>
    </location>
</feature>
<feature type="glycosylation site" description="N-linked (GlcNAc...) asparagine; by host" evidence="3">
    <location>
        <position position="204"/>
    </location>
</feature>
<feature type="glycosylation site" description="N-linked (GlcNAc...) asparagine; by host" evidence="3">
    <location>
        <position position="228"/>
    </location>
</feature>
<feature type="glycosylation site" description="N-linked (GlcNAc...) asparagine; by host" evidence="3">
    <location>
        <position position="257"/>
    </location>
</feature>
<feature type="glycosylation site" description="N-linked (GlcNAc...) asparagine; by host" evidence="3">
    <location>
        <position position="268"/>
    </location>
</feature>
<feature type="disulfide bond" description="Interchain" evidence="1">
    <location>
        <position position="53"/>
    </location>
</feature>
<feature type="disulfide bond" evidence="1">
    <location>
        <begin position="108"/>
        <end position="135"/>
    </location>
</feature>
<feature type="disulfide bond" evidence="1">
    <location>
        <begin position="121"/>
        <end position="147"/>
    </location>
</feature>
<feature type="disulfide bond" description="Interchain" evidence="1">
    <location>
        <position position="306"/>
    </location>
</feature>
<evidence type="ECO:0000250" key="1"/>
<evidence type="ECO:0000250" key="2">
    <source>
        <dbReference type="UniProtKB" id="P60170"/>
    </source>
</evidence>
<evidence type="ECO:0000255" key="3"/>
<evidence type="ECO:0000269" key="4">
    <source>
    </source>
</evidence>
<evidence type="ECO:0000305" key="5"/>
<reference key="1">
    <citation type="journal article" date="1996" name="Proc. Natl. Acad. Sci. U.S.A.">
        <title>The virion glycoproteins of Ebola viruses are encoded in two reading frames and are expressed through transcriptional editing.</title>
        <authorList>
            <person name="Sanchez A."/>
            <person name="Trappier S.G."/>
            <person name="Mahy B.W.J."/>
            <person name="Peters C.J."/>
            <person name="Nichol S.T."/>
        </authorList>
    </citation>
    <scope>NUCLEOTIDE SEQUENCE [GENOMIC RNA]</scope>
    <scope>RNA EDITING</scope>
</reference>
<proteinExistence type="inferred from homology"/>
<protein>
    <recommendedName>
        <fullName>Pre-small/secreted glycoprotein</fullName>
        <shortName>pre-sGP</shortName>
    </recommendedName>
    <component>
        <recommendedName>
            <fullName>Small/secreted glycoprotein</fullName>
            <shortName>sGP</shortName>
        </recommendedName>
    </component>
    <component>
        <recommendedName>
            <fullName>Delta-peptide</fullName>
        </recommendedName>
    </component>
</protein>
<accession>Q66811</accession>
<organism>
    <name type="scientific">Tai Forest ebolavirus (strain Cote d'Ivoire-94)</name>
    <name type="common">TAFV</name>
    <name type="synonym">Cote d'Ivoire Ebola virus</name>
    <dbReference type="NCBI Taxonomy" id="128999"/>
    <lineage>
        <taxon>Viruses</taxon>
        <taxon>Riboviria</taxon>
        <taxon>Orthornavirae</taxon>
        <taxon>Negarnaviricota</taxon>
        <taxon>Haploviricotina</taxon>
        <taxon>Monjiviricetes</taxon>
        <taxon>Mononegavirales</taxon>
        <taxon>Filoviridae</taxon>
        <taxon>Orthoebolavirus</taxon>
        <taxon>Orthoebolavirus taiense</taxon>
        <taxon>Tai Forest ebolavirus</taxon>
    </lineage>
</organism>
<name>VSGP_TAFVC</name>
<sequence>MGASGILQLPRERFRKTSFFVWVIILFHKVFSIPLGVVHNNTLQVSDIDKFVCRDKLSSTSQLKSVGLNLEGNGVATDVPTATKRWGFRAGVPPKVVNYEAGEWAENCYNLAIKKVDGSECLPEAPEGVRDFPRCRYVHKVSGTGPCPGGLAFHKEGAFFLYDRLASTIIYRGTTFAEGVIAFLILPKARKDFFQSPPLHEPANMTTDPSSYYHTTTINYVVDNFGTNTTEFLFQVDHLTYVQLEARFTPQFLVLLNETIYSDNRRSNTTGKLIWKINPTVDTSMGEWAFWENKKTSQKPFQVKSCLSYLYQKPRTRSLTRQRRSLLPSPPTTTQAKTTKNWFQRIPLQWFRCKTSRERTQCQPQ</sequence>